<accession>Q6CPC2</accession>
<proteinExistence type="inferred from homology"/>
<feature type="chain" id="PRO_0000330080" description="Bud site selection protein 4">
    <location>
        <begin position="1"/>
        <end position="1217"/>
    </location>
</feature>
<feature type="domain" description="PH" evidence="2">
    <location>
        <begin position="1086"/>
        <end position="1195"/>
    </location>
</feature>
<feature type="region of interest" description="Disordered" evidence="3">
    <location>
        <begin position="430"/>
        <end position="514"/>
    </location>
</feature>
<feature type="compositionally biased region" description="Polar residues" evidence="3">
    <location>
        <begin position="437"/>
        <end position="468"/>
    </location>
</feature>
<feature type="compositionally biased region" description="Basic and acidic residues" evidence="3">
    <location>
        <begin position="470"/>
        <end position="500"/>
    </location>
</feature>
<name>BUD4_KLULA</name>
<reference key="1">
    <citation type="journal article" date="2004" name="Nature">
        <title>Genome evolution in yeasts.</title>
        <authorList>
            <person name="Dujon B."/>
            <person name="Sherman D."/>
            <person name="Fischer G."/>
            <person name="Durrens P."/>
            <person name="Casaregola S."/>
            <person name="Lafontaine I."/>
            <person name="de Montigny J."/>
            <person name="Marck C."/>
            <person name="Neuveglise C."/>
            <person name="Talla E."/>
            <person name="Goffard N."/>
            <person name="Frangeul L."/>
            <person name="Aigle M."/>
            <person name="Anthouard V."/>
            <person name="Babour A."/>
            <person name="Barbe V."/>
            <person name="Barnay S."/>
            <person name="Blanchin S."/>
            <person name="Beckerich J.-M."/>
            <person name="Beyne E."/>
            <person name="Bleykasten C."/>
            <person name="Boisrame A."/>
            <person name="Boyer J."/>
            <person name="Cattolico L."/>
            <person name="Confanioleri F."/>
            <person name="de Daruvar A."/>
            <person name="Despons L."/>
            <person name="Fabre E."/>
            <person name="Fairhead C."/>
            <person name="Ferry-Dumazet H."/>
            <person name="Groppi A."/>
            <person name="Hantraye F."/>
            <person name="Hennequin C."/>
            <person name="Jauniaux N."/>
            <person name="Joyet P."/>
            <person name="Kachouri R."/>
            <person name="Kerrest A."/>
            <person name="Koszul R."/>
            <person name="Lemaire M."/>
            <person name="Lesur I."/>
            <person name="Ma L."/>
            <person name="Muller H."/>
            <person name="Nicaud J.-M."/>
            <person name="Nikolski M."/>
            <person name="Oztas S."/>
            <person name="Ozier-Kalogeropoulos O."/>
            <person name="Pellenz S."/>
            <person name="Potier S."/>
            <person name="Richard G.-F."/>
            <person name="Straub M.-L."/>
            <person name="Suleau A."/>
            <person name="Swennen D."/>
            <person name="Tekaia F."/>
            <person name="Wesolowski-Louvel M."/>
            <person name="Westhof E."/>
            <person name="Wirth B."/>
            <person name="Zeniou-Meyer M."/>
            <person name="Zivanovic Y."/>
            <person name="Bolotin-Fukuhara M."/>
            <person name="Thierry A."/>
            <person name="Bouchier C."/>
            <person name="Caudron B."/>
            <person name="Scarpelli C."/>
            <person name="Gaillardin C."/>
            <person name="Weissenbach J."/>
            <person name="Wincker P."/>
            <person name="Souciet J.-L."/>
        </authorList>
    </citation>
    <scope>NUCLEOTIDE SEQUENCE [LARGE SCALE GENOMIC DNA]</scope>
    <source>
        <strain>ATCC 8585 / CBS 2359 / DSM 70799 / NBRC 1267 / NRRL Y-1140 / WM37</strain>
    </source>
</reference>
<keyword id="KW-0131">Cell cycle</keyword>
<keyword id="KW-0132">Cell division</keyword>
<keyword id="KW-1185">Reference proteome</keyword>
<protein>
    <recommendedName>
        <fullName>Bud site selection protein 4</fullName>
    </recommendedName>
</protein>
<gene>
    <name type="primary">BUD4</name>
    <name type="ordered locus">KLLA0E05962g</name>
</gene>
<comment type="function">
    <text evidence="1">Required for selection of future bud sites. Cooperates with other bud site selection proteins to recognize a spatial landmark during mitosis and they subsequently become a landmark for downstream polarity establishment factors that coordinate budding and cytokinesis. Involved in the septin organization at the bud neck (By similarity).</text>
</comment>
<comment type="subcellular location">
    <subcellularLocation>
        <location>Bud neck</location>
    </subcellularLocation>
    <text evidence="1">Localizes to two distinct rings on either side of the mother-bud neck.</text>
</comment>
<comment type="similarity">
    <text evidence="4">Belongs to the BUD4 family.</text>
</comment>
<dbReference type="EMBL" id="CR382125">
    <property type="protein sequence ID" value="CAG99304.1"/>
    <property type="molecule type" value="Genomic_DNA"/>
</dbReference>
<dbReference type="RefSeq" id="XP_454217.1">
    <property type="nucleotide sequence ID" value="XM_454217.1"/>
</dbReference>
<dbReference type="SMR" id="Q6CPC2"/>
<dbReference type="FunCoup" id="Q6CPC2">
    <property type="interactions" value="197"/>
</dbReference>
<dbReference type="STRING" id="284590.Q6CPC2"/>
<dbReference type="PaxDb" id="284590-Q6CPC2"/>
<dbReference type="KEGG" id="kla:KLLA0_E06007g"/>
<dbReference type="eggNOG" id="ENOG502REBM">
    <property type="taxonomic scope" value="Eukaryota"/>
</dbReference>
<dbReference type="HOGENOM" id="CLU_004727_0_0_1"/>
<dbReference type="InParanoid" id="Q6CPC2"/>
<dbReference type="OMA" id="MLVKHNT"/>
<dbReference type="Proteomes" id="UP000000598">
    <property type="component" value="Chromosome E"/>
</dbReference>
<dbReference type="GO" id="GO:0000142">
    <property type="term" value="C:cellular bud neck contractile ring"/>
    <property type="evidence" value="ECO:0007669"/>
    <property type="project" value="TreeGrafter"/>
</dbReference>
<dbReference type="GO" id="GO:0005525">
    <property type="term" value="F:GTP binding"/>
    <property type="evidence" value="ECO:0007669"/>
    <property type="project" value="TreeGrafter"/>
</dbReference>
<dbReference type="GO" id="GO:0007120">
    <property type="term" value="P:axial cellular bud site selection"/>
    <property type="evidence" value="ECO:0007669"/>
    <property type="project" value="TreeGrafter"/>
</dbReference>
<dbReference type="GO" id="GO:0097271">
    <property type="term" value="P:protein localization to bud neck"/>
    <property type="evidence" value="ECO:0007669"/>
    <property type="project" value="TreeGrafter"/>
</dbReference>
<dbReference type="CDD" id="cd13278">
    <property type="entry name" value="PH_Bud4"/>
    <property type="match status" value="1"/>
</dbReference>
<dbReference type="Gene3D" id="2.30.29.30">
    <property type="entry name" value="Pleckstrin-homology domain (PH domain)/Phosphotyrosine-binding domain (PTB)"/>
    <property type="match status" value="1"/>
</dbReference>
<dbReference type="InterPro" id="IPR052007">
    <property type="entry name" value="Bud4"/>
</dbReference>
<dbReference type="InterPro" id="IPR011993">
    <property type="entry name" value="PH-like_dom_sf"/>
</dbReference>
<dbReference type="InterPro" id="IPR001849">
    <property type="entry name" value="PH_domain"/>
</dbReference>
<dbReference type="PANTHER" id="PTHR36100">
    <property type="entry name" value="BUD SITE SELECTION PROTEIN 4"/>
    <property type="match status" value="1"/>
</dbReference>
<dbReference type="PANTHER" id="PTHR36100:SF1">
    <property type="entry name" value="BUD SITE SELECTION PROTEIN 4"/>
    <property type="match status" value="1"/>
</dbReference>
<dbReference type="Pfam" id="PF00169">
    <property type="entry name" value="PH"/>
    <property type="match status" value="1"/>
</dbReference>
<dbReference type="SMART" id="SM00233">
    <property type="entry name" value="PH"/>
    <property type="match status" value="1"/>
</dbReference>
<dbReference type="SUPFAM" id="SSF50729">
    <property type="entry name" value="PH domain-like"/>
    <property type="match status" value="1"/>
</dbReference>
<dbReference type="PROSITE" id="PS50003">
    <property type="entry name" value="PH_DOMAIN"/>
    <property type="match status" value="1"/>
</dbReference>
<evidence type="ECO:0000250" key="1"/>
<evidence type="ECO:0000255" key="2">
    <source>
        <dbReference type="PROSITE-ProRule" id="PRU00145"/>
    </source>
</evidence>
<evidence type="ECO:0000256" key="3">
    <source>
        <dbReference type="SAM" id="MobiDB-lite"/>
    </source>
</evidence>
<evidence type="ECO:0000305" key="4"/>
<organism>
    <name type="scientific">Kluyveromyces lactis (strain ATCC 8585 / CBS 2359 / DSM 70799 / NBRC 1267 / NRRL Y-1140 / WM37)</name>
    <name type="common">Yeast</name>
    <name type="synonym">Candida sphaerica</name>
    <dbReference type="NCBI Taxonomy" id="284590"/>
    <lineage>
        <taxon>Eukaryota</taxon>
        <taxon>Fungi</taxon>
        <taxon>Dikarya</taxon>
        <taxon>Ascomycota</taxon>
        <taxon>Saccharomycotina</taxon>
        <taxon>Saccharomycetes</taxon>
        <taxon>Saccharomycetales</taxon>
        <taxon>Saccharomycetaceae</taxon>
        <taxon>Kluyveromyces</taxon>
    </lineage>
</organism>
<sequence>MQMEDKGEALNPDAMYSLLKEIDQEISHTDNISIDQLPEEDTLDNEKKIDASENVIENTEEEALQLGDESANTTTEIKETSCTEDHDTVENTEDVISMAEGLDKAPLETAWIKHNYQQTKPVVSKRLISNDGSDTSVEDINASTRIPSYTSEEITGLELKDKMVTDVGERLSHFLDQKYAENPNLPALKGMLSMADEKAMEDDPKKDKPLVFTIEPTKPLFPSKEVSSTMIQVEIHTPDEDDVDGAAADTKEATNLLLDSKIPVTPNVCINRFVNNNGETRVSSGSSTEDAQELNTHRFQDRYHLLSGAQAVPQLPQLPALTLQDYKSSSVQSVNASRIFSVATTNDNYQSAKEYDLSSTVGCEELSDDASVKDLEIPEPNELPCFPTFQLDSTSMKTSSSMETVQHDKAKFNSDVNIADDTMEQIEQEEAELISNPERSGSPTNDNMSQHSQNRQLLGVSEVSQAQQAPEHHVEMSVEFQDEGRRDITSSFSRESDRIELPPLPPMNGLSTMFDQDLFNDHETSHESIDLTSSSHKENYLSIWHSQKTGGSFISPALSTNSQFSTQSRTSSVPTNHSGSSFKFKSRIISNSHVFKQEAFRQFSDEYVLSTQDDSKLDPLRRNTIMSKRIQQELKTQAKMYPFANKFALDESSEPSIHNESIITGDISRTSDKAVDTTNILSHKNLTLLPPQSTETVFSSFLDNFDKDDFEEKLAEESRLNSKKNLQTTWGHFRDVSSGNVDIKATQQQIAEVLHNQNEDVVQVGSHIQDVKVLLGNEIEGYDVQKSVSDLSVETTKKSPIKHVGSPFKVKARSETPPQSPVVYERDTTEVNEGLQRAPTTSLASVYLENSLQEFESSELQDHGKLYLKLKSINSLRLQQIKRHNAKYCIEFDNGKEVIETPWESIPEDGPIKMSQEFEVNMESNNVTLFMTMKIRYTSPQNQLTEVVEKIPIKKRFAFGKTKYRLEKRFVTKKLKYDDWDFKFAKDGSFARCQVNVNKNMLKQIKYKTNELHFEFLNEWEREFDEKIAQTYKEDELWKLPRKNPSKVCSLTVDVMYLPRTSSMERFPKNLKAVQKCCEKYLEQQRVNNEGFLWQEGGDVEGMLKRRYMILKGTELIAHDEVTRKPQTLLNLLNVVDIYSDGKTATGKQMRNFTDMVLFSDCFKLLFANDEVINFNADSNLLKQQWVEILTSVVELNKFHQPWIKRVFENEQYNITF</sequence>